<accession>P38740</accession>
<accession>D3DKU2</accession>
<comment type="subcellular location">
    <subcellularLocation>
        <location evidence="4">Membrane</location>
        <topology evidence="4">Multi-pass membrane protein</topology>
    </subcellularLocation>
</comment>
<comment type="miscellaneous">
    <text evidence="3">Present with 830 molecules/cell in log phase SD medium.</text>
</comment>
<protein>
    <recommendedName>
        <fullName>Uncharacterized protein YHL026C</fullName>
    </recommendedName>
</protein>
<gene>
    <name type="ordered locus">YHL026C</name>
</gene>
<dbReference type="EMBL" id="U11583">
    <property type="protein sequence ID" value="AAB65062.2"/>
    <property type="molecule type" value="Genomic_DNA"/>
</dbReference>
<dbReference type="EMBL" id="AY558104">
    <property type="protein sequence ID" value="AAS56430.1"/>
    <property type="molecule type" value="Genomic_DNA"/>
</dbReference>
<dbReference type="EMBL" id="BK006934">
    <property type="protein sequence ID" value="DAA06659.1"/>
    <property type="molecule type" value="Genomic_DNA"/>
</dbReference>
<dbReference type="PIR" id="S48942">
    <property type="entry name" value="S48942"/>
</dbReference>
<dbReference type="RefSeq" id="NP_011837.2">
    <property type="nucleotide sequence ID" value="NM_001179106.1"/>
</dbReference>
<dbReference type="BioGRID" id="36396">
    <property type="interactions" value="27"/>
</dbReference>
<dbReference type="DIP" id="DIP-2744N"/>
<dbReference type="FunCoup" id="P38740">
    <property type="interactions" value="37"/>
</dbReference>
<dbReference type="IntAct" id="P38740">
    <property type="interactions" value="2"/>
</dbReference>
<dbReference type="MINT" id="P38740"/>
<dbReference type="STRING" id="4932.YHL026C"/>
<dbReference type="GlyGen" id="P38740">
    <property type="glycosylation" value="1 site"/>
</dbReference>
<dbReference type="iPTMnet" id="P38740"/>
<dbReference type="PaxDb" id="4932-YHL026C"/>
<dbReference type="PeptideAtlas" id="P38740"/>
<dbReference type="EnsemblFungi" id="YHL026C_mRNA">
    <property type="protein sequence ID" value="YHL026C"/>
    <property type="gene ID" value="YHL026C"/>
</dbReference>
<dbReference type="GeneID" id="856359"/>
<dbReference type="KEGG" id="sce:YHL026C"/>
<dbReference type="AGR" id="SGD:S000001018"/>
<dbReference type="SGD" id="S000001018">
    <property type="gene designation" value="YHL026C"/>
</dbReference>
<dbReference type="VEuPathDB" id="FungiDB:YHL026C"/>
<dbReference type="eggNOG" id="ENOG502S4IY">
    <property type="taxonomic scope" value="Eukaryota"/>
</dbReference>
<dbReference type="HOGENOM" id="CLU_076682_0_0_1"/>
<dbReference type="InParanoid" id="P38740"/>
<dbReference type="OMA" id="WEGNDER"/>
<dbReference type="OrthoDB" id="15595at2759"/>
<dbReference type="BioCyc" id="YEAST:G3O-31046-MONOMER"/>
<dbReference type="BioGRID-ORCS" id="856359">
    <property type="hits" value="1 hit in 10 CRISPR screens"/>
</dbReference>
<dbReference type="PRO" id="PR:P38740"/>
<dbReference type="Proteomes" id="UP000002311">
    <property type="component" value="Chromosome VIII"/>
</dbReference>
<dbReference type="RNAct" id="P38740">
    <property type="molecule type" value="protein"/>
</dbReference>
<dbReference type="GO" id="GO:0071944">
    <property type="term" value="C:cell periphery"/>
    <property type="evidence" value="ECO:0007005"/>
    <property type="project" value="SGD"/>
</dbReference>
<dbReference type="GO" id="GO:0016020">
    <property type="term" value="C:membrane"/>
    <property type="evidence" value="ECO:0007669"/>
    <property type="project" value="UniProtKB-SubCell"/>
</dbReference>
<dbReference type="InterPro" id="IPR018852">
    <property type="entry name" value="DUF2456"/>
</dbReference>
<dbReference type="PANTHER" id="PTHR28297">
    <property type="entry name" value="FUNGAL PROTEIN"/>
    <property type="match status" value="1"/>
</dbReference>
<dbReference type="PANTHER" id="PTHR28297:SF1">
    <property type="entry name" value="FUNGAL PROTEIN"/>
    <property type="match status" value="1"/>
</dbReference>
<dbReference type="Pfam" id="PF10445">
    <property type="entry name" value="DUF2456"/>
    <property type="match status" value="1"/>
</dbReference>
<reference key="1">
    <citation type="journal article" date="1994" name="Science">
        <title>Complete nucleotide sequence of Saccharomyces cerevisiae chromosome VIII.</title>
        <authorList>
            <person name="Johnston M."/>
            <person name="Andrews S."/>
            <person name="Brinkman R."/>
            <person name="Cooper J."/>
            <person name="Ding H."/>
            <person name="Dover J."/>
            <person name="Du Z."/>
            <person name="Favello A."/>
            <person name="Fulton L."/>
            <person name="Gattung S."/>
            <person name="Geisel C."/>
            <person name="Kirsten J."/>
            <person name="Kucaba T."/>
            <person name="Hillier L.W."/>
            <person name="Jier M."/>
            <person name="Johnston L."/>
            <person name="Langston Y."/>
            <person name="Latreille P."/>
            <person name="Louis E.J."/>
            <person name="Macri C."/>
            <person name="Mardis E."/>
            <person name="Menezes S."/>
            <person name="Mouser L."/>
            <person name="Nhan M."/>
            <person name="Rifkin L."/>
            <person name="Riles L."/>
            <person name="St Peter H."/>
            <person name="Trevaskis E."/>
            <person name="Vaughan K."/>
            <person name="Vignati D."/>
            <person name="Wilcox L."/>
            <person name="Wohldman P."/>
            <person name="Waterston R."/>
            <person name="Wilson R."/>
            <person name="Vaudin M."/>
        </authorList>
    </citation>
    <scope>NUCLEOTIDE SEQUENCE [LARGE SCALE GENOMIC DNA]</scope>
    <source>
        <strain>ATCC 204508 / S288c</strain>
    </source>
</reference>
<reference key="2">
    <citation type="submission" date="2005-11" db="EMBL/GenBank/DDBJ databases">
        <authorList>
            <person name="Hong E.L."/>
        </authorList>
    </citation>
    <scope>SEQUENCE REVISION TO N-TERMINUS</scope>
</reference>
<reference key="3">
    <citation type="journal article" date="2014" name="G3 (Bethesda)">
        <title>The reference genome sequence of Saccharomyces cerevisiae: Then and now.</title>
        <authorList>
            <person name="Engel S.R."/>
            <person name="Dietrich F.S."/>
            <person name="Fisk D.G."/>
            <person name="Binkley G."/>
            <person name="Balakrishnan R."/>
            <person name="Costanzo M.C."/>
            <person name="Dwight S.S."/>
            <person name="Hitz B.C."/>
            <person name="Karra K."/>
            <person name="Nash R.S."/>
            <person name="Weng S."/>
            <person name="Wong E.D."/>
            <person name="Lloyd P."/>
            <person name="Skrzypek M.S."/>
            <person name="Miyasato S.R."/>
            <person name="Simison M."/>
            <person name="Cherry J.M."/>
        </authorList>
    </citation>
    <scope>GENOME REANNOTATION</scope>
    <source>
        <strain>ATCC 204508 / S288c</strain>
    </source>
</reference>
<reference key="4">
    <citation type="journal article" date="2007" name="Genome Res.">
        <title>Approaching a complete repository of sequence-verified protein-encoding clones for Saccharomyces cerevisiae.</title>
        <authorList>
            <person name="Hu Y."/>
            <person name="Rolfs A."/>
            <person name="Bhullar B."/>
            <person name="Murthy T.V.S."/>
            <person name="Zhu C."/>
            <person name="Berger M.F."/>
            <person name="Camargo A.A."/>
            <person name="Kelley F."/>
            <person name="McCarron S."/>
            <person name="Jepson D."/>
            <person name="Richardson A."/>
            <person name="Raphael J."/>
            <person name="Moreira D."/>
            <person name="Taycher E."/>
            <person name="Zuo D."/>
            <person name="Mohr S."/>
            <person name="Kane M.F."/>
            <person name="Williamson J."/>
            <person name="Simpson A.J.G."/>
            <person name="Bulyk M.L."/>
            <person name="Harlow E."/>
            <person name="Marsischky G."/>
            <person name="Kolodner R.D."/>
            <person name="LaBaer J."/>
        </authorList>
    </citation>
    <scope>NUCLEOTIDE SEQUENCE [GENOMIC DNA] OF 48-315</scope>
    <source>
        <strain>ATCC 204508 / S288c</strain>
    </source>
</reference>
<reference key="5">
    <citation type="journal article" date="2003" name="Science">
        <title>Finding functional features in Saccharomyces genomes by phylogenetic footprinting.</title>
        <authorList>
            <person name="Cliften P.F."/>
            <person name="Sudarsanam P."/>
            <person name="Desikan A."/>
            <person name="Fulton L."/>
            <person name="Fulton B."/>
            <person name="Majors J."/>
            <person name="Waterston R."/>
            <person name="Cohen B.A."/>
            <person name="Johnston M."/>
        </authorList>
    </citation>
    <scope>IDENTIFICATION OF FRAMESHIFT</scope>
</reference>
<reference key="6">
    <citation type="journal article" date="2003" name="Nature">
        <title>Global analysis of protein expression in yeast.</title>
        <authorList>
            <person name="Ghaemmaghami S."/>
            <person name="Huh W.-K."/>
            <person name="Bower K."/>
            <person name="Howson R.W."/>
            <person name="Belle A."/>
            <person name="Dephoure N."/>
            <person name="O'Shea E.K."/>
            <person name="Weissman J.S."/>
        </authorList>
    </citation>
    <scope>LEVEL OF PROTEIN EXPRESSION [LARGE SCALE ANALYSIS]</scope>
</reference>
<organism>
    <name type="scientific">Saccharomyces cerevisiae (strain ATCC 204508 / S288c)</name>
    <name type="common">Baker's yeast</name>
    <dbReference type="NCBI Taxonomy" id="559292"/>
    <lineage>
        <taxon>Eukaryota</taxon>
        <taxon>Fungi</taxon>
        <taxon>Dikarya</taxon>
        <taxon>Ascomycota</taxon>
        <taxon>Saccharomycotina</taxon>
        <taxon>Saccharomycetes</taxon>
        <taxon>Saccharomycetales</taxon>
        <taxon>Saccharomycetaceae</taxon>
        <taxon>Saccharomyces</taxon>
    </lineage>
</organism>
<name>YHC6_YEAST</name>
<proteinExistence type="evidence at protein level"/>
<evidence type="ECO:0000255" key="1"/>
<evidence type="ECO:0000256" key="2">
    <source>
        <dbReference type="SAM" id="MobiDB-lite"/>
    </source>
</evidence>
<evidence type="ECO:0000269" key="3">
    <source>
    </source>
</evidence>
<evidence type="ECO:0000305" key="4"/>
<feature type="chain" id="PRO_0000014325" description="Uncharacterized protein YHL026C">
    <location>
        <begin position="1"/>
        <end position="315"/>
    </location>
</feature>
<feature type="transmembrane region" description="Helical" evidence="1">
    <location>
        <begin position="18"/>
        <end position="38"/>
    </location>
</feature>
<feature type="transmembrane region" description="Helical" evidence="1">
    <location>
        <begin position="202"/>
        <end position="222"/>
    </location>
</feature>
<feature type="transmembrane region" description="Helical" evidence="1">
    <location>
        <begin position="244"/>
        <end position="264"/>
    </location>
</feature>
<feature type="region of interest" description="Disordered" evidence="2">
    <location>
        <begin position="288"/>
        <end position="315"/>
    </location>
</feature>
<keyword id="KW-0472">Membrane</keyword>
<keyword id="KW-1185">Reference proteome</keyword>
<keyword id="KW-0812">Transmembrane</keyword>
<keyword id="KW-1133">Transmembrane helix</keyword>
<sequence length="315" mass="35717">MKSSEPAPATPTGFRNSIWFIIFYLFVIQALGSAIISGGIEFAIAYAMYHSRVDLITLWAFPHTISGDCALSLFIQVGLTWASEEILVGFDDYKRPVFRLNKWITKPSPLKTESNEEIPPPKKRFIVDYFESKDNVVAKQNTLYHKHNWLFGYLEVNRGIIPKGKEATLKGFLTSQFIHDSTQSKFMNFIEWFVQKFIRSMILAIAMFIVIWPVTMGILAGIGHKVGSHDYYFNDYPLPQVMKLIYAVVIAFVCTPVAIIVIVLRNQFHEELYYEGLANGTLQQDQEVCSTGNRSSGSTDQDISTTKQQSQEAVA</sequence>